<accession>A7FQN7</accession>
<feature type="chain" id="PRO_1000009606" description="Phosphoglycerate kinase">
    <location>
        <begin position="1"/>
        <end position="398"/>
    </location>
</feature>
<feature type="binding site" evidence="1">
    <location>
        <begin position="23"/>
        <end position="25"/>
    </location>
    <ligand>
        <name>substrate</name>
    </ligand>
</feature>
<feature type="binding site" evidence="1">
    <location>
        <position position="38"/>
    </location>
    <ligand>
        <name>substrate</name>
    </ligand>
</feature>
<feature type="binding site" evidence="1">
    <location>
        <begin position="61"/>
        <end position="64"/>
    </location>
    <ligand>
        <name>substrate</name>
    </ligand>
</feature>
<feature type="binding site" evidence="1">
    <location>
        <position position="122"/>
    </location>
    <ligand>
        <name>substrate</name>
    </ligand>
</feature>
<feature type="binding site" evidence="1">
    <location>
        <position position="155"/>
    </location>
    <ligand>
        <name>substrate</name>
    </ligand>
</feature>
<feature type="binding site" evidence="1">
    <location>
        <position position="206"/>
    </location>
    <ligand>
        <name>ATP</name>
        <dbReference type="ChEBI" id="CHEBI:30616"/>
    </ligand>
</feature>
<feature type="binding site" evidence="1">
    <location>
        <position position="297"/>
    </location>
    <ligand>
        <name>ATP</name>
        <dbReference type="ChEBI" id="CHEBI:30616"/>
    </ligand>
</feature>
<feature type="binding site" evidence="1">
    <location>
        <position position="328"/>
    </location>
    <ligand>
        <name>ATP</name>
        <dbReference type="ChEBI" id="CHEBI:30616"/>
    </ligand>
</feature>
<feature type="binding site" evidence="1">
    <location>
        <begin position="354"/>
        <end position="357"/>
    </location>
    <ligand>
        <name>ATP</name>
        <dbReference type="ChEBI" id="CHEBI:30616"/>
    </ligand>
</feature>
<proteinExistence type="inferred from homology"/>
<reference key="1">
    <citation type="journal article" date="2007" name="PLoS ONE">
        <title>Analysis of the neurotoxin complex genes in Clostridium botulinum A1-A4 and B1 strains: BoNT/A3, /Ba4 and /B1 clusters are located within plasmids.</title>
        <authorList>
            <person name="Smith T.J."/>
            <person name="Hill K.K."/>
            <person name="Foley B.T."/>
            <person name="Detter J.C."/>
            <person name="Munk A.C."/>
            <person name="Bruce D.C."/>
            <person name="Doggett N.A."/>
            <person name="Smith L.A."/>
            <person name="Marks J.D."/>
            <person name="Xie G."/>
            <person name="Brettin T.S."/>
        </authorList>
    </citation>
    <scope>NUCLEOTIDE SEQUENCE [LARGE SCALE GENOMIC DNA]</scope>
    <source>
        <strain>ATCC 19397 / Type A</strain>
    </source>
</reference>
<evidence type="ECO:0000255" key="1">
    <source>
        <dbReference type="HAMAP-Rule" id="MF_00145"/>
    </source>
</evidence>
<comment type="catalytic activity">
    <reaction evidence="1">
        <text>(2R)-3-phosphoglycerate + ATP = (2R)-3-phospho-glyceroyl phosphate + ADP</text>
        <dbReference type="Rhea" id="RHEA:14801"/>
        <dbReference type="ChEBI" id="CHEBI:30616"/>
        <dbReference type="ChEBI" id="CHEBI:57604"/>
        <dbReference type="ChEBI" id="CHEBI:58272"/>
        <dbReference type="ChEBI" id="CHEBI:456216"/>
        <dbReference type="EC" id="2.7.2.3"/>
    </reaction>
</comment>
<comment type="pathway">
    <text evidence="1">Carbohydrate degradation; glycolysis; pyruvate from D-glyceraldehyde 3-phosphate: step 2/5.</text>
</comment>
<comment type="subunit">
    <text evidence="1">Monomer.</text>
</comment>
<comment type="subcellular location">
    <subcellularLocation>
        <location evidence="1">Cytoplasm</location>
    </subcellularLocation>
</comment>
<comment type="similarity">
    <text evidence="1">Belongs to the phosphoglycerate kinase family.</text>
</comment>
<name>PGK_CLOB1</name>
<gene>
    <name evidence="1" type="primary">pgk</name>
    <name type="ordered locus">CLB_0268</name>
</gene>
<protein>
    <recommendedName>
        <fullName evidence="1">Phosphoglycerate kinase</fullName>
        <ecNumber evidence="1">2.7.2.3</ecNumber>
    </recommendedName>
</protein>
<dbReference type="EC" id="2.7.2.3" evidence="1"/>
<dbReference type="EMBL" id="CP000726">
    <property type="protein sequence ID" value="ABS33444.1"/>
    <property type="molecule type" value="Genomic_DNA"/>
</dbReference>
<dbReference type="RefSeq" id="WP_011948027.1">
    <property type="nucleotide sequence ID" value="NC_009697.1"/>
</dbReference>
<dbReference type="SMR" id="A7FQN7"/>
<dbReference type="KEGG" id="cba:CLB_0268"/>
<dbReference type="HOGENOM" id="CLU_025427_0_2_9"/>
<dbReference type="UniPathway" id="UPA00109">
    <property type="reaction ID" value="UER00185"/>
</dbReference>
<dbReference type="GO" id="GO:0005829">
    <property type="term" value="C:cytosol"/>
    <property type="evidence" value="ECO:0007669"/>
    <property type="project" value="TreeGrafter"/>
</dbReference>
<dbReference type="GO" id="GO:0043531">
    <property type="term" value="F:ADP binding"/>
    <property type="evidence" value="ECO:0007669"/>
    <property type="project" value="TreeGrafter"/>
</dbReference>
<dbReference type="GO" id="GO:0005524">
    <property type="term" value="F:ATP binding"/>
    <property type="evidence" value="ECO:0007669"/>
    <property type="project" value="UniProtKB-KW"/>
</dbReference>
<dbReference type="GO" id="GO:0004618">
    <property type="term" value="F:phosphoglycerate kinase activity"/>
    <property type="evidence" value="ECO:0007669"/>
    <property type="project" value="UniProtKB-UniRule"/>
</dbReference>
<dbReference type="GO" id="GO:0006094">
    <property type="term" value="P:gluconeogenesis"/>
    <property type="evidence" value="ECO:0007669"/>
    <property type="project" value="TreeGrafter"/>
</dbReference>
<dbReference type="GO" id="GO:0006096">
    <property type="term" value="P:glycolytic process"/>
    <property type="evidence" value="ECO:0007669"/>
    <property type="project" value="UniProtKB-UniRule"/>
</dbReference>
<dbReference type="CDD" id="cd00318">
    <property type="entry name" value="Phosphoglycerate_kinase"/>
    <property type="match status" value="1"/>
</dbReference>
<dbReference type="FunFam" id="3.40.50.1260:FF:000007">
    <property type="entry name" value="Phosphoglycerate kinase"/>
    <property type="match status" value="1"/>
</dbReference>
<dbReference type="FunFam" id="3.40.50.1260:FF:000008">
    <property type="entry name" value="Phosphoglycerate kinase"/>
    <property type="match status" value="1"/>
</dbReference>
<dbReference type="Gene3D" id="3.40.50.1260">
    <property type="entry name" value="Phosphoglycerate kinase, N-terminal domain"/>
    <property type="match status" value="2"/>
</dbReference>
<dbReference type="HAMAP" id="MF_00145">
    <property type="entry name" value="Phosphoglyc_kinase"/>
    <property type="match status" value="1"/>
</dbReference>
<dbReference type="InterPro" id="IPR001576">
    <property type="entry name" value="Phosphoglycerate_kinase"/>
</dbReference>
<dbReference type="InterPro" id="IPR015911">
    <property type="entry name" value="Phosphoglycerate_kinase_CS"/>
</dbReference>
<dbReference type="InterPro" id="IPR015824">
    <property type="entry name" value="Phosphoglycerate_kinase_N"/>
</dbReference>
<dbReference type="InterPro" id="IPR036043">
    <property type="entry name" value="Phosphoglycerate_kinase_sf"/>
</dbReference>
<dbReference type="PANTHER" id="PTHR11406">
    <property type="entry name" value="PHOSPHOGLYCERATE KINASE"/>
    <property type="match status" value="1"/>
</dbReference>
<dbReference type="PANTHER" id="PTHR11406:SF23">
    <property type="entry name" value="PHOSPHOGLYCERATE KINASE 1, CHLOROPLASTIC-RELATED"/>
    <property type="match status" value="1"/>
</dbReference>
<dbReference type="Pfam" id="PF00162">
    <property type="entry name" value="PGK"/>
    <property type="match status" value="1"/>
</dbReference>
<dbReference type="PIRSF" id="PIRSF000724">
    <property type="entry name" value="Pgk"/>
    <property type="match status" value="1"/>
</dbReference>
<dbReference type="PRINTS" id="PR00477">
    <property type="entry name" value="PHGLYCKINASE"/>
</dbReference>
<dbReference type="SUPFAM" id="SSF53748">
    <property type="entry name" value="Phosphoglycerate kinase"/>
    <property type="match status" value="1"/>
</dbReference>
<dbReference type="PROSITE" id="PS00111">
    <property type="entry name" value="PGLYCERATE_KINASE"/>
    <property type="match status" value="1"/>
</dbReference>
<keyword id="KW-0067">ATP-binding</keyword>
<keyword id="KW-0963">Cytoplasm</keyword>
<keyword id="KW-0324">Glycolysis</keyword>
<keyword id="KW-0418">Kinase</keyword>
<keyword id="KW-0547">Nucleotide-binding</keyword>
<keyword id="KW-0808">Transferase</keyword>
<organism>
    <name type="scientific">Clostridium botulinum (strain ATCC 19397 / Type A)</name>
    <dbReference type="NCBI Taxonomy" id="441770"/>
    <lineage>
        <taxon>Bacteria</taxon>
        <taxon>Bacillati</taxon>
        <taxon>Bacillota</taxon>
        <taxon>Clostridia</taxon>
        <taxon>Eubacteriales</taxon>
        <taxon>Clostridiaceae</taxon>
        <taxon>Clostridium</taxon>
    </lineage>
</organism>
<sequence length="398" mass="43062">MNYNKKSIEDIDVKGKKVLVRCDFNVPLNEGKITDENRLVGALPTIKYLMEKGAKIILCSHMGKPKGEPKKELSLLPVAKRLSEMLNKEVIFADDDNVVGENAKKAVEDMKDGDVVLLQNTRYRKEETKNEEVFSKELASLADVFVNDAFGTAHRAHCSTVGVTNYLKEAACGYLIQKELKFLGNAVEKPERPFVAILGGAKVSDKINVINNLLDKVDTLIIGGGMGYTFLKAQGYTIGNSLVEEDKVEYSKEMIDKAKEKGVNLLLPIDNVVADKFDKDASPVITEDQNIGEGYMGLDIGPKTAKIYSDAIKSAKTVVWNGPMGVFEFKSFANGTIEVAKAMADSDAVTIIGGGDSAAAVNILGFGDKMTHISTGGGASLEFLEGKELPGIAALNDK</sequence>